<gene>
    <name evidence="3" type="primary">dmaW</name>
    <name type="ORF">TRV_01863</name>
</gene>
<sequence length="375" mass="42705">MGSIEIPNCSGSIVYKTISDFIDFPDHEQKLWWHSTAPMFAEMLRVAGYDLHSQYKILGIFLNHVIPFLGVYPTRINNRWLSILTRYGTPFELSLNCSQSLVRYTYEPINSATGTVKDPFNTHSIWDALDRLMPLQKGIDLEFFKHLKQDLTVDDQDSAYLLENNLVGGQIRTQNKLALDLKGGNFVLKTYIYPALKALATGKSIKTLMFDSVYRLCRQNPSLEAPLRALEEYVDSKGPNSTASPRLLSCDLIDPSKSRVKIYILELNVTLEAMEDLWTMGGRLNDASTLAGLEMLRELWDLIKLPPGMREYPEPFLQLGTIPDEQLPLMANYTLHHDQAMPEPQVYFTTFGLNDGRVADGLVTFFERRGWNHMA</sequence>
<accession>D4D449</accession>
<proteinExistence type="inferred from homology"/>
<feature type="chain" id="PRO_0000439103" description="Tryptophan dimethylallyltransferase">
    <location>
        <begin position="1"/>
        <end position="375"/>
    </location>
</feature>
<feature type="binding site" evidence="1">
    <location>
        <begin position="83"/>
        <end position="84"/>
    </location>
    <ligand>
        <name>L-tryptophan</name>
        <dbReference type="ChEBI" id="CHEBI:57912"/>
    </ligand>
</feature>
<feature type="binding site" evidence="1">
    <location>
        <position position="92"/>
    </location>
    <ligand>
        <name>L-tryptophan</name>
        <dbReference type="ChEBI" id="CHEBI:57912"/>
    </ligand>
</feature>
<feature type="binding site" evidence="1">
    <location>
        <position position="103"/>
    </location>
    <ligand>
        <name>substrate</name>
    </ligand>
</feature>
<feature type="binding site" evidence="1">
    <location>
        <position position="189"/>
    </location>
    <ligand>
        <name>substrate</name>
    </ligand>
</feature>
<feature type="binding site" evidence="1">
    <location>
        <position position="191"/>
    </location>
    <ligand>
        <name>substrate</name>
    </ligand>
</feature>
<feature type="binding site" evidence="1">
    <location>
        <position position="193"/>
    </location>
    <ligand>
        <name>L-tryptophan</name>
        <dbReference type="ChEBI" id="CHEBI:57912"/>
    </ligand>
</feature>
<feature type="binding site" evidence="1">
    <location>
        <position position="246"/>
    </location>
    <ligand>
        <name>L-tryptophan</name>
        <dbReference type="ChEBI" id="CHEBI:57912"/>
    </ligand>
</feature>
<feature type="binding site" evidence="1">
    <location>
        <position position="259"/>
    </location>
    <ligand>
        <name>substrate</name>
    </ligand>
</feature>
<feature type="binding site" evidence="1">
    <location>
        <position position="261"/>
    </location>
    <ligand>
        <name>substrate</name>
    </ligand>
</feature>
<feature type="binding site" evidence="1">
    <location>
        <position position="263"/>
    </location>
    <ligand>
        <name>substrate</name>
    </ligand>
</feature>
<feature type="binding site" evidence="1">
    <location>
        <position position="345"/>
    </location>
    <ligand>
        <name>substrate</name>
    </ligand>
</feature>
<feature type="binding site" evidence="1">
    <location>
        <position position="347"/>
    </location>
    <ligand>
        <name>substrate</name>
    </ligand>
</feature>
<evidence type="ECO:0000250" key="1">
    <source>
        <dbReference type="UniProtKB" id="Q50EL0"/>
    </source>
</evidence>
<evidence type="ECO:0000269" key="2">
    <source>
    </source>
</evidence>
<evidence type="ECO:0000303" key="3">
    <source>
    </source>
</evidence>
<evidence type="ECO:0000305" key="4"/>
<evidence type="ECO:0000305" key="5">
    <source>
    </source>
</evidence>
<protein>
    <recommendedName>
        <fullName evidence="4">Tryptophan dimethylallyltransferase</fullName>
        <ecNumber evidence="1">2.5.1.34</ecNumber>
    </recommendedName>
    <alternativeName>
        <fullName evidence="3">4-dimethylallyltryptophan synthase</fullName>
        <shortName evidence="3">DMATS</shortName>
    </alternativeName>
    <alternativeName>
        <fullName evidence="4">All-trans-hexaprenyl-diphosphate synthase</fullName>
    </alternativeName>
    <alternativeName>
        <fullName evidence="4">L-tryptophan dimethylallyl transferase</fullName>
    </alternativeName>
</protein>
<organism>
    <name type="scientific">Trichophyton verrucosum (strain HKI 0517)</name>
    <dbReference type="NCBI Taxonomy" id="663202"/>
    <lineage>
        <taxon>Eukaryota</taxon>
        <taxon>Fungi</taxon>
        <taxon>Dikarya</taxon>
        <taxon>Ascomycota</taxon>
        <taxon>Pezizomycotina</taxon>
        <taxon>Eurotiomycetes</taxon>
        <taxon>Eurotiomycetidae</taxon>
        <taxon>Onygenales</taxon>
        <taxon>Arthrodermataceae</taxon>
        <taxon>Trichophyton</taxon>
    </lineage>
</organism>
<keyword id="KW-0017">Alkaloid metabolism</keyword>
<keyword id="KW-0808">Transferase</keyword>
<name>DMAW_TRIVH</name>
<comment type="function">
    <text evidence="2">Tryptophan dimethylallyltransferase; part of the gene cluster that mediates the biosynthesis of fungal ergot alkaloid (PubMed:22403186). DmaW catalyzes the first step of ergot alkaloid biosynthesis by condensing dimethylallyl diphosphate (DMAP) and tryptophan to form 4-dimethylallyl-L-tryptophan (PubMed:22403186). The second step is catalyzed by the methyltransferase easF that methylates 4-dimethylallyl-L-tryptophan in the presence of S-adenosyl-L-methionine, resulting in the formation of 4-dimethylallyl-L-abrine (PubMed:22403186). The catalase easC and the FAD-dependent oxidoreductase easE then transform 4-dimethylallyl-L-abrine to chanoclavine-I which is further oxidized by easD in the presence of NAD(+), resulting in the formation of chanoclavine-I aldehyde (PubMed:22403186). Chanoclavine-I aldehyde is the precursor of ergoamides and ergopeptines in Clavicipitaceae, and clavine-type alcaloids such as fumiclavine in Trichocomaceae (PubMed:22403186). However, the metabolites downstream of chanoclavine-I aldehyde in Arthrodermataceae have not been identified yet (PubMed:22403186).</text>
</comment>
<comment type="catalytic activity">
    <reaction evidence="1">
        <text>L-tryptophan + dimethylallyl diphosphate = 4-(3-methylbut-2-enyl)-L-tryptophan + diphosphate</text>
        <dbReference type="Rhea" id="RHEA:14173"/>
        <dbReference type="ChEBI" id="CHEBI:33019"/>
        <dbReference type="ChEBI" id="CHEBI:57623"/>
        <dbReference type="ChEBI" id="CHEBI:57912"/>
        <dbReference type="ChEBI" id="CHEBI:58209"/>
        <dbReference type="EC" id="2.5.1.34"/>
    </reaction>
</comment>
<comment type="pathway">
    <text evidence="5">Alkaloid biosynthesis; ergot alkaloid biosynthesis.</text>
</comment>
<comment type="subunit">
    <text evidence="1">Homodimer.</text>
</comment>
<comment type="similarity">
    <text evidence="4">Belongs to the tryptophan dimethylallyltransferase family.</text>
</comment>
<dbReference type="EC" id="2.5.1.34" evidence="1"/>
<dbReference type="EMBL" id="ACYE01000098">
    <property type="protein sequence ID" value="EFE43383.1"/>
    <property type="molecule type" value="Genomic_DNA"/>
</dbReference>
<dbReference type="RefSeq" id="XP_003024001.1">
    <property type="nucleotide sequence ID" value="XM_003023955.1"/>
</dbReference>
<dbReference type="SMR" id="D4D449"/>
<dbReference type="GeneID" id="9582694"/>
<dbReference type="KEGG" id="tve:TRV_01863"/>
<dbReference type="HOGENOM" id="CLU_037431_0_0_1"/>
<dbReference type="OrthoDB" id="119at34384"/>
<dbReference type="UniPathway" id="UPA00327"/>
<dbReference type="Proteomes" id="UP000008383">
    <property type="component" value="Unassembled WGS sequence"/>
</dbReference>
<dbReference type="GO" id="GO:0050364">
    <property type="term" value="F:tryptophan dimethylallyltransferase activity"/>
    <property type="evidence" value="ECO:0007669"/>
    <property type="project" value="UniProtKB-EC"/>
</dbReference>
<dbReference type="GO" id="GO:0035835">
    <property type="term" value="P:indole alkaloid biosynthetic process"/>
    <property type="evidence" value="ECO:0007669"/>
    <property type="project" value="UniProtKB-UniPathway"/>
</dbReference>
<dbReference type="CDD" id="cd13929">
    <property type="entry name" value="PT-DMATS_CymD"/>
    <property type="match status" value="1"/>
</dbReference>
<dbReference type="InterPro" id="IPR033964">
    <property type="entry name" value="Aro_prenylTrfase"/>
</dbReference>
<dbReference type="InterPro" id="IPR017795">
    <property type="entry name" value="Aro_prenylTrfase_DMATS"/>
</dbReference>
<dbReference type="NCBIfam" id="TIGR03429">
    <property type="entry name" value="arom_pren_DMATS"/>
    <property type="match status" value="1"/>
</dbReference>
<dbReference type="PANTHER" id="PTHR40627">
    <property type="entry name" value="INDOLE PRENYLTRANSFERASE TDIB-RELATED"/>
    <property type="match status" value="1"/>
</dbReference>
<dbReference type="PANTHER" id="PTHR40627:SF3">
    <property type="entry name" value="PRENYLTRANSFERASE ASQH2-RELATED"/>
    <property type="match status" value="1"/>
</dbReference>
<dbReference type="Pfam" id="PF11991">
    <property type="entry name" value="Trp_DMAT"/>
    <property type="match status" value="1"/>
</dbReference>
<dbReference type="SFLD" id="SFLDS00036">
    <property type="entry name" value="Aromatic_Prenyltransferase"/>
    <property type="match status" value="1"/>
</dbReference>
<reference key="1">
    <citation type="journal article" date="2011" name="Genome Biol.">
        <title>Comparative and functional genomics provide insights into the pathogenicity of dermatophytic fungi.</title>
        <authorList>
            <person name="Burmester A."/>
            <person name="Shelest E."/>
            <person name="Gloeckner G."/>
            <person name="Heddergott C."/>
            <person name="Schindler S."/>
            <person name="Staib P."/>
            <person name="Heidel A."/>
            <person name="Felder M."/>
            <person name="Petzold A."/>
            <person name="Szafranski K."/>
            <person name="Feuermann M."/>
            <person name="Pedruzzi I."/>
            <person name="Priebe S."/>
            <person name="Groth M."/>
            <person name="Winkler R."/>
            <person name="Li W."/>
            <person name="Kniemeyer O."/>
            <person name="Schroeckh V."/>
            <person name="Hertweck C."/>
            <person name="Hube B."/>
            <person name="White T.C."/>
            <person name="Platzer M."/>
            <person name="Guthke R."/>
            <person name="Heitman J."/>
            <person name="Woestemeyer J."/>
            <person name="Zipfel P.F."/>
            <person name="Monod M."/>
            <person name="Brakhage A.A."/>
        </authorList>
    </citation>
    <scope>NUCLEOTIDE SEQUENCE [LARGE SCALE GENOMIC DNA]</scope>
    <source>
        <strain>HKI 0517</strain>
    </source>
</reference>
<reference key="2">
    <citation type="journal article" date="2012" name="Microbiology">
        <title>Genome mining reveals the presence of a conserved gene cluster for the biosynthesis of ergot alkaloid precursors in the fungal family Arthrodermataceae.</title>
        <authorList>
            <person name="Wallwey C."/>
            <person name="Heddergott C."/>
            <person name="Xie X."/>
            <person name="Brakhage A.A."/>
            <person name="Li S.M."/>
        </authorList>
    </citation>
    <scope>FUNCTION</scope>
</reference>